<evidence type="ECO:0000255" key="1">
    <source>
        <dbReference type="HAMAP-Rule" id="MF_00387"/>
    </source>
</evidence>
<feature type="chain" id="PRO_0000302610" description="Acyl-[acyl-carrier-protein]--UDP-N-acetylglucosamine O-acyltransferase">
    <location>
        <begin position="1"/>
        <end position="263"/>
    </location>
</feature>
<proteinExistence type="inferred from homology"/>
<organism>
    <name type="scientific">Xanthomonas euvesicatoria pv. vesicatoria (strain 85-10)</name>
    <name type="common">Xanthomonas campestris pv. vesicatoria</name>
    <dbReference type="NCBI Taxonomy" id="316273"/>
    <lineage>
        <taxon>Bacteria</taxon>
        <taxon>Pseudomonadati</taxon>
        <taxon>Pseudomonadota</taxon>
        <taxon>Gammaproteobacteria</taxon>
        <taxon>Lysobacterales</taxon>
        <taxon>Lysobacteraceae</taxon>
        <taxon>Xanthomonas</taxon>
    </lineage>
</organism>
<accession>Q3BVL6</accession>
<reference key="1">
    <citation type="journal article" date="2005" name="J. Bacteriol.">
        <title>Insights into genome plasticity and pathogenicity of the plant pathogenic Bacterium Xanthomonas campestris pv. vesicatoria revealed by the complete genome sequence.</title>
        <authorList>
            <person name="Thieme F."/>
            <person name="Koebnik R."/>
            <person name="Bekel T."/>
            <person name="Berger C."/>
            <person name="Boch J."/>
            <person name="Buettner D."/>
            <person name="Caldana C."/>
            <person name="Gaigalat L."/>
            <person name="Goesmann A."/>
            <person name="Kay S."/>
            <person name="Kirchner O."/>
            <person name="Lanz C."/>
            <person name="Linke B."/>
            <person name="McHardy A.C."/>
            <person name="Meyer F."/>
            <person name="Mittenhuber G."/>
            <person name="Nies D.H."/>
            <person name="Niesbach-Kloesgen U."/>
            <person name="Patschkowski T."/>
            <person name="Rueckert C."/>
            <person name="Rupp O."/>
            <person name="Schneiker S."/>
            <person name="Schuster S.C."/>
            <person name="Vorhoelter F.J."/>
            <person name="Weber E."/>
            <person name="Puehler A."/>
            <person name="Bonas U."/>
            <person name="Bartels D."/>
            <person name="Kaiser O."/>
        </authorList>
    </citation>
    <scope>NUCLEOTIDE SEQUENCE [LARGE SCALE GENOMIC DNA]</scope>
    <source>
        <strain>85-10</strain>
    </source>
</reference>
<keyword id="KW-0012">Acyltransferase</keyword>
<keyword id="KW-0963">Cytoplasm</keyword>
<keyword id="KW-0441">Lipid A biosynthesis</keyword>
<keyword id="KW-0444">Lipid biosynthesis</keyword>
<keyword id="KW-0443">Lipid metabolism</keyword>
<keyword id="KW-0677">Repeat</keyword>
<keyword id="KW-0808">Transferase</keyword>
<gene>
    <name evidence="1" type="primary">lpxA</name>
    <name type="ordered locus">XCV1466</name>
</gene>
<sequence>MRDSTPLIHPTAVIDPSATLADDVRVGAFSLIGADVQIGAGTEVGPHCSIHGPTRIGRNNRFIGHAAIGGEPQDKKYAGERTELVIGDGNVIREFVTINRGTGGGGGVTVVGNDNWMLAYTHVAHDCHVGNHCVFSNNTTLAGHVTVGDYVIISGFAGAHQFCRIGAHAFLGMGALTNGDVPPFTMVGSDSLGRPRGINSEGLKRRGFDAERITAIKRAYRTLYVAGLPLADAKLQLAEQAKSSEDVRGMLEFIEAAERPLLR</sequence>
<protein>
    <recommendedName>
        <fullName evidence="1">Acyl-[acyl-carrier-protein]--UDP-N-acetylglucosamine O-acyltransferase</fullName>
        <shortName evidence="1">UDP-N-acetylglucosamine acyltransferase</shortName>
        <ecNumber evidence="1">2.3.1.129</ecNumber>
    </recommendedName>
</protein>
<comment type="function">
    <text evidence="1">Involved in the biosynthesis of lipid A, a phosphorylated glycolipid that anchors the lipopolysaccharide to the outer membrane of the cell.</text>
</comment>
<comment type="catalytic activity">
    <reaction evidence="1">
        <text>a (3R)-hydroxyacyl-[ACP] + UDP-N-acetyl-alpha-D-glucosamine = a UDP-3-O-[(3R)-3-hydroxyacyl]-N-acetyl-alpha-D-glucosamine + holo-[ACP]</text>
        <dbReference type="Rhea" id="RHEA:67812"/>
        <dbReference type="Rhea" id="RHEA-COMP:9685"/>
        <dbReference type="Rhea" id="RHEA-COMP:9945"/>
        <dbReference type="ChEBI" id="CHEBI:57705"/>
        <dbReference type="ChEBI" id="CHEBI:64479"/>
        <dbReference type="ChEBI" id="CHEBI:78827"/>
        <dbReference type="ChEBI" id="CHEBI:173225"/>
        <dbReference type="EC" id="2.3.1.129"/>
    </reaction>
</comment>
<comment type="pathway">
    <text evidence="1">Glycolipid biosynthesis; lipid IV(A) biosynthesis; lipid IV(A) from (3R)-3-hydroxytetradecanoyl-[acyl-carrier-protein] and UDP-N-acetyl-alpha-D-glucosamine: step 1/6.</text>
</comment>
<comment type="subunit">
    <text evidence="1">Homotrimer.</text>
</comment>
<comment type="subcellular location">
    <subcellularLocation>
        <location evidence="1">Cytoplasm</location>
    </subcellularLocation>
</comment>
<comment type="similarity">
    <text evidence="1">Belongs to the transferase hexapeptide repeat family. LpxA subfamily.</text>
</comment>
<dbReference type="EC" id="2.3.1.129" evidence="1"/>
<dbReference type="EMBL" id="AM039952">
    <property type="protein sequence ID" value="CAJ23097.1"/>
    <property type="molecule type" value="Genomic_DNA"/>
</dbReference>
<dbReference type="RefSeq" id="WP_011346889.1">
    <property type="nucleotide sequence ID" value="NZ_CP017190.1"/>
</dbReference>
<dbReference type="SMR" id="Q3BVL6"/>
<dbReference type="STRING" id="456327.BJD11_15315"/>
<dbReference type="GeneID" id="97509763"/>
<dbReference type="KEGG" id="xcv:XCV1466"/>
<dbReference type="eggNOG" id="COG1043">
    <property type="taxonomic scope" value="Bacteria"/>
</dbReference>
<dbReference type="HOGENOM" id="CLU_061249_0_0_6"/>
<dbReference type="UniPathway" id="UPA00359">
    <property type="reaction ID" value="UER00477"/>
</dbReference>
<dbReference type="Proteomes" id="UP000007069">
    <property type="component" value="Chromosome"/>
</dbReference>
<dbReference type="GO" id="GO:0005737">
    <property type="term" value="C:cytoplasm"/>
    <property type="evidence" value="ECO:0007669"/>
    <property type="project" value="UniProtKB-SubCell"/>
</dbReference>
<dbReference type="GO" id="GO:0016020">
    <property type="term" value="C:membrane"/>
    <property type="evidence" value="ECO:0007669"/>
    <property type="project" value="GOC"/>
</dbReference>
<dbReference type="GO" id="GO:0008780">
    <property type="term" value="F:acyl-[acyl-carrier-protein]-UDP-N-acetylglucosamine O-acyltransferase activity"/>
    <property type="evidence" value="ECO:0007669"/>
    <property type="project" value="UniProtKB-UniRule"/>
</dbReference>
<dbReference type="GO" id="GO:0009245">
    <property type="term" value="P:lipid A biosynthetic process"/>
    <property type="evidence" value="ECO:0007669"/>
    <property type="project" value="UniProtKB-UniRule"/>
</dbReference>
<dbReference type="CDD" id="cd03351">
    <property type="entry name" value="LbH_UDP-GlcNAc_AT"/>
    <property type="match status" value="1"/>
</dbReference>
<dbReference type="Gene3D" id="2.160.10.10">
    <property type="entry name" value="Hexapeptide repeat proteins"/>
    <property type="match status" value="1"/>
</dbReference>
<dbReference type="Gene3D" id="1.20.1180.10">
    <property type="entry name" value="Udp N-acetylglucosamine O-acyltransferase, C-terminal domain"/>
    <property type="match status" value="1"/>
</dbReference>
<dbReference type="HAMAP" id="MF_00387">
    <property type="entry name" value="LpxA"/>
    <property type="match status" value="1"/>
</dbReference>
<dbReference type="InterPro" id="IPR029098">
    <property type="entry name" value="Acetyltransf_C"/>
</dbReference>
<dbReference type="InterPro" id="IPR037157">
    <property type="entry name" value="Acetyltransf_C_sf"/>
</dbReference>
<dbReference type="InterPro" id="IPR001451">
    <property type="entry name" value="Hexapep"/>
</dbReference>
<dbReference type="InterPro" id="IPR010137">
    <property type="entry name" value="Lipid_A_LpxA"/>
</dbReference>
<dbReference type="InterPro" id="IPR011004">
    <property type="entry name" value="Trimer_LpxA-like_sf"/>
</dbReference>
<dbReference type="NCBIfam" id="TIGR01852">
    <property type="entry name" value="lipid_A_lpxA"/>
    <property type="match status" value="1"/>
</dbReference>
<dbReference type="NCBIfam" id="NF003657">
    <property type="entry name" value="PRK05289.1"/>
    <property type="match status" value="1"/>
</dbReference>
<dbReference type="PANTHER" id="PTHR43480">
    <property type="entry name" value="ACYL-[ACYL-CARRIER-PROTEIN]--UDP-N-ACETYLGLUCOSAMINE O-ACYLTRANSFERASE"/>
    <property type="match status" value="1"/>
</dbReference>
<dbReference type="PANTHER" id="PTHR43480:SF1">
    <property type="entry name" value="ACYL-[ACYL-CARRIER-PROTEIN]--UDP-N-ACETYLGLUCOSAMINE O-ACYLTRANSFERASE, MITOCHONDRIAL-RELATED"/>
    <property type="match status" value="1"/>
</dbReference>
<dbReference type="Pfam" id="PF13720">
    <property type="entry name" value="Acetyltransf_11"/>
    <property type="match status" value="1"/>
</dbReference>
<dbReference type="Pfam" id="PF00132">
    <property type="entry name" value="Hexapep"/>
    <property type="match status" value="1"/>
</dbReference>
<dbReference type="PIRSF" id="PIRSF000456">
    <property type="entry name" value="UDP-GlcNAc_acltr"/>
    <property type="match status" value="1"/>
</dbReference>
<dbReference type="SUPFAM" id="SSF51161">
    <property type="entry name" value="Trimeric LpxA-like enzymes"/>
    <property type="match status" value="1"/>
</dbReference>
<name>LPXA_XANE5</name>